<keyword id="KW-0112">Calmodulin-binding</keyword>
<keyword id="KW-0378">Hydrolase</keyword>
<keyword id="KW-0645">Protease</keyword>
<keyword id="KW-1185">Reference proteome</keyword>
<keyword id="KW-0788">Thiol protease</keyword>
<keyword id="KW-0833">Ubl conjugation pathway</keyword>
<name>UBP7_ARATH</name>
<reference key="1">
    <citation type="journal article" date="2000" name="Plant Physiol.">
        <title>The ubiquitin-specific protease family from Arabidopsis. AtUBP1 and 2 are required for the resistance to the amino acid analog canavanine.</title>
        <authorList>
            <person name="Yan N."/>
            <person name="Doelling J.H."/>
            <person name="Falbel T.G."/>
            <person name="Durski A.M."/>
            <person name="Vierstra R.D."/>
        </authorList>
    </citation>
    <scope>NUCLEOTIDE SEQUENCE [MRNA]</scope>
    <scope>GENE FAMILY ORGANIZATION</scope>
    <scope>NOMENCLATURE</scope>
    <source>
        <strain>cv. Columbia</strain>
    </source>
</reference>
<reference key="2">
    <citation type="journal article" date="2000" name="DNA Res.">
        <title>Structural analysis of Arabidopsis thaliana chromosome 3. I. Sequence features of the regions of 4,504,864 bp covered by sixty P1 and TAC clones.</title>
        <authorList>
            <person name="Sato S."/>
            <person name="Nakamura Y."/>
            <person name="Kaneko T."/>
            <person name="Katoh T."/>
            <person name="Asamizu E."/>
            <person name="Tabata S."/>
        </authorList>
    </citation>
    <scope>NUCLEOTIDE SEQUENCE [LARGE SCALE GENOMIC DNA]</scope>
    <source>
        <strain>cv. Columbia</strain>
    </source>
</reference>
<reference key="3">
    <citation type="journal article" date="2017" name="Plant J.">
        <title>Araport11: a complete reannotation of the Arabidopsis thaliana reference genome.</title>
        <authorList>
            <person name="Cheng C.Y."/>
            <person name="Krishnakumar V."/>
            <person name="Chan A.P."/>
            <person name="Thibaud-Nissen F."/>
            <person name="Schobel S."/>
            <person name="Town C.D."/>
        </authorList>
    </citation>
    <scope>GENOME REANNOTATION</scope>
    <source>
        <strain>cv. Columbia</strain>
    </source>
</reference>
<reference key="4">
    <citation type="journal article" date="2003" name="Science">
        <title>Empirical analysis of transcriptional activity in the Arabidopsis genome.</title>
        <authorList>
            <person name="Yamada K."/>
            <person name="Lim J."/>
            <person name="Dale J.M."/>
            <person name="Chen H."/>
            <person name="Shinn P."/>
            <person name="Palm C.J."/>
            <person name="Southwick A.M."/>
            <person name="Wu H.C."/>
            <person name="Kim C.J."/>
            <person name="Nguyen M."/>
            <person name="Pham P.K."/>
            <person name="Cheuk R.F."/>
            <person name="Karlin-Newmann G."/>
            <person name="Liu S.X."/>
            <person name="Lam B."/>
            <person name="Sakano H."/>
            <person name="Wu T."/>
            <person name="Yu G."/>
            <person name="Miranda M."/>
            <person name="Quach H.L."/>
            <person name="Tripp M."/>
            <person name="Chang C.H."/>
            <person name="Lee J.M."/>
            <person name="Toriumi M.J."/>
            <person name="Chan M.M."/>
            <person name="Tang C.C."/>
            <person name="Onodera C.S."/>
            <person name="Deng J.M."/>
            <person name="Akiyama K."/>
            <person name="Ansari Y."/>
            <person name="Arakawa T."/>
            <person name="Banh J."/>
            <person name="Banno F."/>
            <person name="Bowser L."/>
            <person name="Brooks S.Y."/>
            <person name="Carninci P."/>
            <person name="Chao Q."/>
            <person name="Choy N."/>
            <person name="Enju A."/>
            <person name="Goldsmith A.D."/>
            <person name="Gurjal M."/>
            <person name="Hansen N.F."/>
            <person name="Hayashizaki Y."/>
            <person name="Johnson-Hopson C."/>
            <person name="Hsuan V.W."/>
            <person name="Iida K."/>
            <person name="Karnes M."/>
            <person name="Khan S."/>
            <person name="Koesema E."/>
            <person name="Ishida J."/>
            <person name="Jiang P.X."/>
            <person name="Jones T."/>
            <person name="Kawai J."/>
            <person name="Kamiya A."/>
            <person name="Meyers C."/>
            <person name="Nakajima M."/>
            <person name="Narusaka M."/>
            <person name="Seki M."/>
            <person name="Sakurai T."/>
            <person name="Satou M."/>
            <person name="Tamse R."/>
            <person name="Vaysberg M."/>
            <person name="Wallender E.K."/>
            <person name="Wong C."/>
            <person name="Yamamura Y."/>
            <person name="Yuan S."/>
            <person name="Shinozaki K."/>
            <person name="Davis R.W."/>
            <person name="Theologis A."/>
            <person name="Ecker J.R."/>
        </authorList>
    </citation>
    <scope>NUCLEOTIDE SEQUENCE [LARGE SCALE MRNA]</scope>
    <source>
        <strain>cv. Columbia</strain>
    </source>
</reference>
<reference key="5">
    <citation type="journal article" date="2005" name="FEBS Lett.">
        <title>Arabidopsis ubiquitin-specific protease 6 (AtUBP6) interacts with calmodulin.</title>
        <authorList>
            <person name="Moon B.C."/>
            <person name="Choi M.S."/>
            <person name="Kang Y.H."/>
            <person name="Kim M.C."/>
            <person name="Cheong M.S."/>
            <person name="Park C.Y."/>
            <person name="Yoo J.H."/>
            <person name="Koo S.C."/>
            <person name="Lee S.M."/>
            <person name="Lim C.O."/>
            <person name="Cho M.J."/>
            <person name="Chung W.S."/>
        </authorList>
    </citation>
    <scope>INTERACTION WITH CALMODULIN</scope>
</reference>
<feature type="chain" id="PRO_0000313034" description="Ubiquitin carboxyl-terminal hydrolase 7">
    <location>
        <begin position="1"/>
        <end position="477"/>
    </location>
</feature>
<feature type="domain" description="Ubiquitin-like" evidence="2">
    <location>
        <begin position="2"/>
        <end position="77"/>
    </location>
</feature>
<feature type="domain" description="USP">
    <location>
        <begin position="104"/>
        <end position="473"/>
    </location>
</feature>
<feature type="region of interest" description="Calmodulin-binding" evidence="1">
    <location>
        <begin position="171"/>
        <end position="190"/>
    </location>
</feature>
<feature type="region of interest" description="Disordered" evidence="5">
    <location>
        <begin position="364"/>
        <end position="401"/>
    </location>
</feature>
<feature type="compositionally biased region" description="Basic and acidic residues" evidence="5">
    <location>
        <begin position="371"/>
        <end position="380"/>
    </location>
</feature>
<feature type="compositionally biased region" description="Polar residues" evidence="5">
    <location>
        <begin position="382"/>
        <end position="399"/>
    </location>
</feature>
<feature type="active site" description="Nucleophile" evidence="3 4">
    <location>
        <position position="113"/>
    </location>
</feature>
<feature type="active site" description="Proton acceptor" evidence="3 4">
    <location>
        <position position="425"/>
    </location>
</feature>
<feature type="sequence conflict" description="In Ref. 1; AAG42752." evidence="7" ref="1">
    <original>S</original>
    <variation>F</variation>
    <location>
        <position position="209"/>
    </location>
</feature>
<feature type="sequence conflict" description="In Ref. 1; AAG42752." evidence="7" ref="1">
    <original>P</original>
    <variation>A</variation>
    <location>
        <position position="217"/>
    </location>
</feature>
<proteinExistence type="evidence at protein level"/>
<comment type="function">
    <text evidence="1">Recognizes and hydrolyzes the peptide bond at the C-terminal Gly of ubiquitin. Involved in the processing of poly-ubiquitin precursors as well as that of ubiquitinated proteins (By similarity).</text>
</comment>
<comment type="catalytic activity">
    <reaction>
        <text>Thiol-dependent hydrolysis of ester, thioester, amide, peptide and isopeptide bonds formed by the C-terminal Gly of ubiquitin (a 76-residue protein attached to proteins as an intracellular targeting signal).</text>
        <dbReference type="EC" id="3.4.19.12"/>
    </reaction>
</comment>
<comment type="subunit">
    <text evidence="6">Interacts with calmodulin (CaM).</text>
</comment>
<comment type="similarity">
    <text evidence="7">Belongs to the peptidase C19 family.</text>
</comment>
<comment type="sequence caution" evidence="7">
    <conflict type="erroneous initiation">
        <sequence resource="EMBL-CDS" id="AEE76487"/>
    </conflict>
    <text>Extended N-terminus.</text>
</comment>
<comment type="sequence caution" evidence="7">
    <conflict type="erroneous gene model prediction">
        <sequence resource="EMBL-CDS" id="BAB01721"/>
    </conflict>
</comment>
<sequence length="477" mass="53516">MLTVSVKWQKKVFESIEIDTSQPPFVFKAQLYDLSGVPPERQKIMVKGGLLKDDADWSTLGLKNGQKLMMMGTADEIVKAPEKGPVFMEDLPEEQQAANLGYSAGLVNLGNTCYMNSTMQCLISVPELKSELSNYQSARTKDVDQTSHMLTVATRELFSELDKSVKAVAPMPFWMVLQKKYPQFAQLHNGNHMQQDAEECWTQMLYTLSQSLKLPSPSEDPDAVKALFGLNLLNRLHCQESSEESSETESVFSLKCHISHEVNHLHEGLKHGLKGELEKTSPSLGRTAVYVKESLIDSLPRYLTVQFVRFFWKRESNQKAKILRKVDYPLELDIYDLCSEDLRKKLEAPRQKLRDIEGQKLGLQASAKSSSKGDDVKMTDAEGSSNQSGESSTGDQQEGASPHMTGIYDLVSVLTHKGRSADSGHYVAWVKQESGKWVQYDDANTSLQRGEDIIKLSGGGDWHMAYIVMYKARLISM</sequence>
<accession>Q84WC6</accession>
<accession>F4IXI8</accession>
<accession>Q9FPT3</accession>
<accession>Q9LU31</accession>
<gene>
    <name type="primary">UBP7</name>
    <name type="ordered locus">At3g21280</name>
    <name type="ORF">MXL8.15</name>
</gene>
<evidence type="ECO:0000250" key="1"/>
<evidence type="ECO:0000255" key="2">
    <source>
        <dbReference type="PROSITE-ProRule" id="PRU00214"/>
    </source>
</evidence>
<evidence type="ECO:0000255" key="3">
    <source>
        <dbReference type="PROSITE-ProRule" id="PRU10092"/>
    </source>
</evidence>
<evidence type="ECO:0000255" key="4">
    <source>
        <dbReference type="PROSITE-ProRule" id="PRU10093"/>
    </source>
</evidence>
<evidence type="ECO:0000256" key="5">
    <source>
        <dbReference type="SAM" id="MobiDB-lite"/>
    </source>
</evidence>
<evidence type="ECO:0000269" key="6">
    <source>
    </source>
</evidence>
<evidence type="ECO:0000305" key="7"/>
<dbReference type="EC" id="3.4.19.12"/>
<dbReference type="EMBL" id="AF302661">
    <property type="protein sequence ID" value="AAG42752.1"/>
    <property type="molecule type" value="mRNA"/>
</dbReference>
<dbReference type="EMBL" id="AB023045">
    <property type="protein sequence ID" value="BAB01721.1"/>
    <property type="status" value="ALT_SEQ"/>
    <property type="molecule type" value="Genomic_DNA"/>
</dbReference>
<dbReference type="EMBL" id="CP002686">
    <property type="protein sequence ID" value="AEE76487.1"/>
    <property type="status" value="ALT_INIT"/>
    <property type="molecule type" value="Genomic_DNA"/>
</dbReference>
<dbReference type="EMBL" id="BT003992">
    <property type="protein sequence ID" value="AAO42031.1"/>
    <property type="molecule type" value="mRNA"/>
</dbReference>
<dbReference type="RefSeq" id="NP_566680.2">
    <property type="nucleotide sequence ID" value="NM_113023.4"/>
</dbReference>
<dbReference type="SMR" id="Q84WC6"/>
<dbReference type="BioGRID" id="7014">
    <property type="interactions" value="6"/>
</dbReference>
<dbReference type="FunCoup" id="Q84WC6">
    <property type="interactions" value="3853"/>
</dbReference>
<dbReference type="STRING" id="3702.Q84WC6"/>
<dbReference type="MEROPS" id="C19.A05"/>
<dbReference type="PaxDb" id="3702-AT3G21280.1"/>
<dbReference type="ProteomicsDB" id="245288"/>
<dbReference type="GeneID" id="821682"/>
<dbReference type="KEGG" id="ath:AT3G21280"/>
<dbReference type="Araport" id="AT3G21280"/>
<dbReference type="TAIR" id="AT3G21280">
    <property type="gene designation" value="UBP7"/>
</dbReference>
<dbReference type="eggNOG" id="KOG1872">
    <property type="taxonomic scope" value="Eukaryota"/>
</dbReference>
<dbReference type="HOGENOM" id="CLU_017549_2_1_1"/>
<dbReference type="InParanoid" id="Q84WC6"/>
<dbReference type="PhylomeDB" id="Q84WC6"/>
<dbReference type="PRO" id="PR:Q84WC6"/>
<dbReference type="Proteomes" id="UP000006548">
    <property type="component" value="Chromosome 3"/>
</dbReference>
<dbReference type="ExpressionAtlas" id="Q84WC6">
    <property type="expression patterns" value="baseline and differential"/>
</dbReference>
<dbReference type="GO" id="GO:0005516">
    <property type="term" value="F:calmodulin binding"/>
    <property type="evidence" value="ECO:0007669"/>
    <property type="project" value="UniProtKB-KW"/>
</dbReference>
<dbReference type="GO" id="GO:0004843">
    <property type="term" value="F:cysteine-type deubiquitinase activity"/>
    <property type="evidence" value="ECO:0000318"/>
    <property type="project" value="GO_Central"/>
</dbReference>
<dbReference type="GO" id="GO:0070628">
    <property type="term" value="F:proteasome binding"/>
    <property type="evidence" value="ECO:0000318"/>
    <property type="project" value="GO_Central"/>
</dbReference>
<dbReference type="GO" id="GO:1904293">
    <property type="term" value="P:negative regulation of ERAD pathway"/>
    <property type="evidence" value="ECO:0000318"/>
    <property type="project" value="GO_Central"/>
</dbReference>
<dbReference type="GO" id="GO:0043161">
    <property type="term" value="P:proteasome-mediated ubiquitin-dependent protein catabolic process"/>
    <property type="evidence" value="ECO:0007669"/>
    <property type="project" value="InterPro"/>
</dbReference>
<dbReference type="GO" id="GO:0016579">
    <property type="term" value="P:protein deubiquitination"/>
    <property type="evidence" value="ECO:0007669"/>
    <property type="project" value="InterPro"/>
</dbReference>
<dbReference type="CDD" id="cd02657">
    <property type="entry name" value="Peptidase_C19A"/>
    <property type="match status" value="1"/>
</dbReference>
<dbReference type="CDD" id="cd16104">
    <property type="entry name" value="Ubl_USP14_like"/>
    <property type="match status" value="1"/>
</dbReference>
<dbReference type="FunFam" id="3.10.20.90:FF:000119">
    <property type="entry name" value="Ubiquitin carboxyl-terminal hydrolase 14"/>
    <property type="match status" value="1"/>
</dbReference>
<dbReference type="FunFam" id="3.90.70.10:FF:000032">
    <property type="entry name" value="Ubiquitin carboxyl-terminal hydrolase 14"/>
    <property type="match status" value="1"/>
</dbReference>
<dbReference type="Gene3D" id="3.90.70.10">
    <property type="entry name" value="Cysteine proteinases"/>
    <property type="match status" value="1"/>
</dbReference>
<dbReference type="Gene3D" id="3.10.20.90">
    <property type="entry name" value="Phosphatidylinositol 3-kinase Catalytic Subunit, Chain A, domain 1"/>
    <property type="match status" value="1"/>
</dbReference>
<dbReference type="InterPro" id="IPR038765">
    <property type="entry name" value="Papain-like_cys_pep_sf"/>
</dbReference>
<dbReference type="InterPro" id="IPR001394">
    <property type="entry name" value="Peptidase_C19_UCH"/>
</dbReference>
<dbReference type="InterPro" id="IPR000626">
    <property type="entry name" value="Ubiquitin-like_dom"/>
</dbReference>
<dbReference type="InterPro" id="IPR029071">
    <property type="entry name" value="Ubiquitin-like_domsf"/>
</dbReference>
<dbReference type="InterPro" id="IPR019954">
    <property type="entry name" value="Ubiquitin_CS"/>
</dbReference>
<dbReference type="InterPro" id="IPR044635">
    <property type="entry name" value="UBP14-like"/>
</dbReference>
<dbReference type="InterPro" id="IPR018200">
    <property type="entry name" value="USP_CS"/>
</dbReference>
<dbReference type="InterPro" id="IPR028889">
    <property type="entry name" value="USP_dom"/>
</dbReference>
<dbReference type="PANTHER" id="PTHR43982">
    <property type="entry name" value="UBIQUITIN CARBOXYL-TERMINAL HYDROLASE"/>
    <property type="match status" value="1"/>
</dbReference>
<dbReference type="PANTHER" id="PTHR43982:SF1">
    <property type="entry name" value="UBIQUITIN CARBOXYL-TERMINAL HYDROLASE 14"/>
    <property type="match status" value="1"/>
</dbReference>
<dbReference type="Pfam" id="PF00240">
    <property type="entry name" value="ubiquitin"/>
    <property type="match status" value="1"/>
</dbReference>
<dbReference type="Pfam" id="PF00443">
    <property type="entry name" value="UCH"/>
    <property type="match status" value="1"/>
</dbReference>
<dbReference type="SMART" id="SM00213">
    <property type="entry name" value="UBQ"/>
    <property type="match status" value="1"/>
</dbReference>
<dbReference type="SUPFAM" id="SSF54001">
    <property type="entry name" value="Cysteine proteinases"/>
    <property type="match status" value="1"/>
</dbReference>
<dbReference type="SUPFAM" id="SSF54236">
    <property type="entry name" value="Ubiquitin-like"/>
    <property type="match status" value="1"/>
</dbReference>
<dbReference type="PROSITE" id="PS00299">
    <property type="entry name" value="UBIQUITIN_1"/>
    <property type="match status" value="1"/>
</dbReference>
<dbReference type="PROSITE" id="PS50053">
    <property type="entry name" value="UBIQUITIN_2"/>
    <property type="match status" value="1"/>
</dbReference>
<dbReference type="PROSITE" id="PS00972">
    <property type="entry name" value="USP_1"/>
    <property type="match status" value="1"/>
</dbReference>
<dbReference type="PROSITE" id="PS00973">
    <property type="entry name" value="USP_2"/>
    <property type="match status" value="1"/>
</dbReference>
<dbReference type="PROSITE" id="PS50235">
    <property type="entry name" value="USP_3"/>
    <property type="match status" value="1"/>
</dbReference>
<organism>
    <name type="scientific">Arabidopsis thaliana</name>
    <name type="common">Mouse-ear cress</name>
    <dbReference type="NCBI Taxonomy" id="3702"/>
    <lineage>
        <taxon>Eukaryota</taxon>
        <taxon>Viridiplantae</taxon>
        <taxon>Streptophyta</taxon>
        <taxon>Embryophyta</taxon>
        <taxon>Tracheophyta</taxon>
        <taxon>Spermatophyta</taxon>
        <taxon>Magnoliopsida</taxon>
        <taxon>eudicotyledons</taxon>
        <taxon>Gunneridae</taxon>
        <taxon>Pentapetalae</taxon>
        <taxon>rosids</taxon>
        <taxon>malvids</taxon>
        <taxon>Brassicales</taxon>
        <taxon>Brassicaceae</taxon>
        <taxon>Camelineae</taxon>
        <taxon>Arabidopsis</taxon>
    </lineage>
</organism>
<protein>
    <recommendedName>
        <fullName>Ubiquitin carboxyl-terminal hydrolase 7</fullName>
        <ecNumber>3.4.19.12</ecNumber>
    </recommendedName>
    <alternativeName>
        <fullName>Deubiquitinating enzyme 7</fullName>
        <shortName>AtUBP7</shortName>
    </alternativeName>
    <alternativeName>
        <fullName>Ubiquitin thioesterase 7</fullName>
    </alternativeName>
    <alternativeName>
        <fullName>Ubiquitin-specific-processing protease 7</fullName>
    </alternativeName>
</protein>